<evidence type="ECO:0000255" key="1">
    <source>
        <dbReference type="HAMAP-Rule" id="MF_00331"/>
    </source>
</evidence>
<evidence type="ECO:0000305" key="2"/>
<feature type="chain" id="PRO_0000150289" description="Cysteine desulfurase IscS">
    <location>
        <begin position="1"/>
        <end position="404"/>
    </location>
</feature>
<feature type="active site" description="Cysteine persulfide intermediate" evidence="1">
    <location>
        <position position="338"/>
    </location>
</feature>
<feature type="binding site" evidence="1">
    <location>
        <begin position="85"/>
        <end position="86"/>
    </location>
    <ligand>
        <name>pyridoxal 5'-phosphate</name>
        <dbReference type="ChEBI" id="CHEBI:597326"/>
    </ligand>
</feature>
<feature type="binding site" evidence="1">
    <location>
        <position position="165"/>
    </location>
    <ligand>
        <name>pyridoxal 5'-phosphate</name>
        <dbReference type="ChEBI" id="CHEBI:597326"/>
    </ligand>
</feature>
<feature type="binding site" evidence="1">
    <location>
        <position position="193"/>
    </location>
    <ligand>
        <name>pyridoxal 5'-phosphate</name>
        <dbReference type="ChEBI" id="CHEBI:597326"/>
    </ligand>
</feature>
<feature type="binding site" evidence="1">
    <location>
        <begin position="213"/>
        <end position="215"/>
    </location>
    <ligand>
        <name>pyridoxal 5'-phosphate</name>
        <dbReference type="ChEBI" id="CHEBI:597326"/>
    </ligand>
</feature>
<feature type="binding site" evidence="1">
    <location>
        <position position="251"/>
    </location>
    <ligand>
        <name>pyridoxal 5'-phosphate</name>
        <dbReference type="ChEBI" id="CHEBI:597326"/>
    </ligand>
</feature>
<feature type="binding site" description="via persulfide group" evidence="1">
    <location>
        <position position="338"/>
    </location>
    <ligand>
        <name>[2Fe-2S] cluster</name>
        <dbReference type="ChEBI" id="CHEBI:190135"/>
        <note>ligand shared with IscU</note>
    </ligand>
</feature>
<name>ISCS_METTE</name>
<gene>
    <name evidence="1" type="primary">iscS</name>
    <name type="synonym">nifS</name>
</gene>
<sequence>MAIHNCEGENVSTENKAVYMDNSATTPVRKEVVEAMLPYMTENFGNPSSIYEIGKTSKHAINLARKKAADALGAEENEIYFTSGGTESDNWAIKGIAFANRDKGKHIITSSIEHHAVLHTCAWLEGQGFEVTYLPVDKYGMVSPDELRNAIRDDTILISIMFANNEIGTIQPIKEIGEIAKENQIYFHTDAVQAIGHVPIDVKKLNIDLLSLSGHEFEGPKGCGALYIRKGVKIDPLLHGGAQERKRRAGTENVPGIVGLGKATELATAEIEESNRTLLKLRDRLIEGLLKIPKTHLNGHPTQRLANNVNVTFEYIEGESLLLLLNAKGIYASTGSACNSSSLEPSHVLTACGVPHEIIHGSLRLSLGRMNTSEDVDRVLEVVPEIVQKLRNMSPLTPKEYRTL</sequence>
<reference key="1">
    <citation type="journal article" date="2000" name="FEMS Microbiol. Lett.">
        <title>Cysteine biosynthesis in the archaea: Methanosarcina thermophila utilizes O-acetylserine sulfhydrylase.</title>
        <authorList>
            <person name="Borupa B."/>
            <person name="Ferryb J.G."/>
        </authorList>
    </citation>
    <scope>NUCLEOTIDE SEQUENCE [GENOMIC DNA]</scope>
</reference>
<comment type="function">
    <text evidence="1">Master enzyme that delivers sulfur to a number of partners involved in Fe-S cluster assembly, tRNA modification or cofactor biosynthesis. Catalyzes the removal of elemental sulfur atoms from cysteine to produce alanine. Functions as a sulfur delivery protein for Fe-S cluster synthesis onto IscU, an Fe-S scaffold assembly protein, as well as other S acceptor proteins.</text>
</comment>
<comment type="catalytic activity">
    <reaction evidence="1">
        <text>(sulfur carrier)-H + L-cysteine = (sulfur carrier)-SH + L-alanine</text>
        <dbReference type="Rhea" id="RHEA:43892"/>
        <dbReference type="Rhea" id="RHEA-COMP:14737"/>
        <dbReference type="Rhea" id="RHEA-COMP:14739"/>
        <dbReference type="ChEBI" id="CHEBI:29917"/>
        <dbReference type="ChEBI" id="CHEBI:35235"/>
        <dbReference type="ChEBI" id="CHEBI:57972"/>
        <dbReference type="ChEBI" id="CHEBI:64428"/>
        <dbReference type="EC" id="2.8.1.7"/>
    </reaction>
</comment>
<comment type="cofactor">
    <cofactor evidence="1">
        <name>pyridoxal 5'-phosphate</name>
        <dbReference type="ChEBI" id="CHEBI:597326"/>
    </cofactor>
</comment>
<comment type="pathway">
    <text evidence="1">Cofactor biosynthesis; iron-sulfur cluster biosynthesis.</text>
</comment>
<comment type="subunit">
    <text evidence="1">Homodimer. Forms a heterotetramer with IscU, interacts with other sulfur acceptors.</text>
</comment>
<comment type="subcellular location">
    <subcellularLocation>
        <location evidence="1">Cytoplasm</location>
    </subcellularLocation>
</comment>
<comment type="miscellaneous">
    <text evidence="1">In Archaea the pyridoxal phosphate cofactor is not covalently bound to Lys but ligated by other amino acids.</text>
</comment>
<comment type="similarity">
    <text evidence="1">Belongs to the class-V pyridoxal-phosphate-dependent aminotransferase family. NifS/IscS subfamily.</text>
</comment>
<comment type="caution">
    <text evidence="2">The conserved pyridoxal-binding site Lys at position 216 is replaced by a Glu.</text>
</comment>
<organism>
    <name type="scientific">Methanosarcina thermophila</name>
    <dbReference type="NCBI Taxonomy" id="2210"/>
    <lineage>
        <taxon>Archaea</taxon>
        <taxon>Methanobacteriati</taxon>
        <taxon>Methanobacteriota</taxon>
        <taxon>Stenosarchaea group</taxon>
        <taxon>Methanomicrobia</taxon>
        <taxon>Methanosarcinales</taxon>
        <taxon>Methanosarcinaceae</taxon>
        <taxon>Methanosarcina</taxon>
    </lineage>
</organism>
<keyword id="KW-0001">2Fe-2S</keyword>
<keyword id="KW-0963">Cytoplasm</keyword>
<keyword id="KW-0408">Iron</keyword>
<keyword id="KW-0411">Iron-sulfur</keyword>
<keyword id="KW-0479">Metal-binding</keyword>
<keyword id="KW-0663">Pyridoxal phosphate</keyword>
<keyword id="KW-0808">Transferase</keyword>
<accession>P57795</accession>
<proteinExistence type="inferred from homology"/>
<protein>
    <recommendedName>
        <fullName evidence="1">Cysteine desulfurase IscS</fullName>
        <ecNumber evidence="1">2.8.1.7</ecNumber>
    </recommendedName>
</protein>
<dbReference type="EC" id="2.8.1.7" evidence="1"/>
<dbReference type="EMBL" id="AF276772">
    <property type="protein sequence ID" value="AAG01802.1"/>
    <property type="molecule type" value="Genomic_DNA"/>
</dbReference>
<dbReference type="SMR" id="P57795"/>
<dbReference type="UniPathway" id="UPA00266"/>
<dbReference type="GO" id="GO:0005737">
    <property type="term" value="C:cytoplasm"/>
    <property type="evidence" value="ECO:0007669"/>
    <property type="project" value="UniProtKB-SubCell"/>
</dbReference>
<dbReference type="GO" id="GO:0051537">
    <property type="term" value="F:2 iron, 2 sulfur cluster binding"/>
    <property type="evidence" value="ECO:0007669"/>
    <property type="project" value="UniProtKB-UniRule"/>
</dbReference>
<dbReference type="GO" id="GO:0031071">
    <property type="term" value="F:cysteine desulfurase activity"/>
    <property type="evidence" value="ECO:0007669"/>
    <property type="project" value="UniProtKB-UniRule"/>
</dbReference>
<dbReference type="GO" id="GO:0046872">
    <property type="term" value="F:metal ion binding"/>
    <property type="evidence" value="ECO:0007669"/>
    <property type="project" value="UniProtKB-KW"/>
</dbReference>
<dbReference type="GO" id="GO:0030170">
    <property type="term" value="F:pyridoxal phosphate binding"/>
    <property type="evidence" value="ECO:0007669"/>
    <property type="project" value="UniProtKB-UniRule"/>
</dbReference>
<dbReference type="GO" id="GO:0044571">
    <property type="term" value="P:[2Fe-2S] cluster assembly"/>
    <property type="evidence" value="ECO:0007669"/>
    <property type="project" value="UniProtKB-UniRule"/>
</dbReference>
<dbReference type="GO" id="GO:0006520">
    <property type="term" value="P:amino acid metabolic process"/>
    <property type="evidence" value="ECO:0007669"/>
    <property type="project" value="InterPro"/>
</dbReference>
<dbReference type="FunFam" id="3.40.640.10:FF:000003">
    <property type="entry name" value="Cysteine desulfurase IscS"/>
    <property type="match status" value="1"/>
</dbReference>
<dbReference type="Gene3D" id="3.90.1150.10">
    <property type="entry name" value="Aspartate Aminotransferase, domain 1"/>
    <property type="match status" value="1"/>
</dbReference>
<dbReference type="Gene3D" id="3.40.640.10">
    <property type="entry name" value="Type I PLP-dependent aspartate aminotransferase-like (Major domain)"/>
    <property type="match status" value="1"/>
</dbReference>
<dbReference type="HAMAP" id="MF_00331">
    <property type="entry name" value="Cys_desulf_IscS"/>
    <property type="match status" value="1"/>
</dbReference>
<dbReference type="InterPro" id="IPR000192">
    <property type="entry name" value="Aminotrans_V_dom"/>
</dbReference>
<dbReference type="InterPro" id="IPR010240">
    <property type="entry name" value="Cys_deSase_IscS"/>
</dbReference>
<dbReference type="InterPro" id="IPR017772">
    <property type="entry name" value="Cys_deSase_NifS_bac/arc"/>
</dbReference>
<dbReference type="InterPro" id="IPR016454">
    <property type="entry name" value="Cysteine_dSase"/>
</dbReference>
<dbReference type="InterPro" id="IPR015424">
    <property type="entry name" value="PyrdxlP-dep_Trfase"/>
</dbReference>
<dbReference type="InterPro" id="IPR015421">
    <property type="entry name" value="PyrdxlP-dep_Trfase_major"/>
</dbReference>
<dbReference type="InterPro" id="IPR015422">
    <property type="entry name" value="PyrdxlP-dep_Trfase_small"/>
</dbReference>
<dbReference type="NCBIfam" id="TIGR03402">
    <property type="entry name" value="FeS_nifS"/>
    <property type="match status" value="1"/>
</dbReference>
<dbReference type="NCBIfam" id="NF002806">
    <property type="entry name" value="PRK02948.1"/>
    <property type="match status" value="1"/>
</dbReference>
<dbReference type="PANTHER" id="PTHR11601:SF34">
    <property type="entry name" value="CYSTEINE DESULFURASE"/>
    <property type="match status" value="1"/>
</dbReference>
<dbReference type="PANTHER" id="PTHR11601">
    <property type="entry name" value="CYSTEINE DESULFURYLASE FAMILY MEMBER"/>
    <property type="match status" value="1"/>
</dbReference>
<dbReference type="Pfam" id="PF00266">
    <property type="entry name" value="Aminotran_5"/>
    <property type="match status" value="1"/>
</dbReference>
<dbReference type="PIRSF" id="PIRSF005572">
    <property type="entry name" value="NifS"/>
    <property type="match status" value="1"/>
</dbReference>
<dbReference type="SUPFAM" id="SSF53383">
    <property type="entry name" value="PLP-dependent transferases"/>
    <property type="match status" value="1"/>
</dbReference>